<proteinExistence type="inferred from homology"/>
<protein>
    <recommendedName>
        <fullName evidence="7">Highly reducing polyketide synthase SAT13</fullName>
        <ecNumber evidence="9">2.3.1.-</ecNumber>
    </recommendedName>
    <alternativeName>
        <fullName evidence="7">Satratoxin biosynthesis SC2 cluster protein 13</fullName>
    </alternativeName>
</protein>
<dbReference type="EC" id="2.3.1.-" evidence="9"/>
<dbReference type="EMBL" id="KL648628">
    <property type="protein sequence ID" value="KEY67212.1"/>
    <property type="molecule type" value="Genomic_DNA"/>
</dbReference>
<dbReference type="SMR" id="A0A084API3"/>
<dbReference type="HOGENOM" id="CLU_000022_31_0_1"/>
<dbReference type="OrthoDB" id="275712at5125"/>
<dbReference type="Proteomes" id="UP000028045">
    <property type="component" value="Unassembled WGS sequence"/>
</dbReference>
<dbReference type="GO" id="GO:0004312">
    <property type="term" value="F:fatty acid synthase activity"/>
    <property type="evidence" value="ECO:0007669"/>
    <property type="project" value="TreeGrafter"/>
</dbReference>
<dbReference type="GO" id="GO:0016491">
    <property type="term" value="F:oxidoreductase activity"/>
    <property type="evidence" value="ECO:0007669"/>
    <property type="project" value="UniProtKB-KW"/>
</dbReference>
<dbReference type="GO" id="GO:0031177">
    <property type="term" value="F:phosphopantetheine binding"/>
    <property type="evidence" value="ECO:0007669"/>
    <property type="project" value="InterPro"/>
</dbReference>
<dbReference type="GO" id="GO:0006633">
    <property type="term" value="P:fatty acid biosynthetic process"/>
    <property type="evidence" value="ECO:0007669"/>
    <property type="project" value="TreeGrafter"/>
</dbReference>
<dbReference type="GO" id="GO:0030639">
    <property type="term" value="P:polyketide biosynthetic process"/>
    <property type="evidence" value="ECO:0007669"/>
    <property type="project" value="UniProtKB-ARBA"/>
</dbReference>
<dbReference type="CDD" id="cd05195">
    <property type="entry name" value="enoyl_red"/>
    <property type="match status" value="1"/>
</dbReference>
<dbReference type="CDD" id="cd05274">
    <property type="entry name" value="KR_FAS_SDR_x"/>
    <property type="match status" value="1"/>
</dbReference>
<dbReference type="CDD" id="cd00833">
    <property type="entry name" value="PKS"/>
    <property type="match status" value="1"/>
</dbReference>
<dbReference type="Gene3D" id="3.40.47.10">
    <property type="match status" value="1"/>
</dbReference>
<dbReference type="Gene3D" id="1.10.1200.10">
    <property type="entry name" value="ACP-like"/>
    <property type="match status" value="1"/>
</dbReference>
<dbReference type="Gene3D" id="3.40.366.10">
    <property type="entry name" value="Malonyl-Coenzyme A Acyl Carrier Protein, domain 2"/>
    <property type="match status" value="1"/>
</dbReference>
<dbReference type="Gene3D" id="3.90.180.10">
    <property type="entry name" value="Medium-chain alcohol dehydrogenases, catalytic domain"/>
    <property type="match status" value="1"/>
</dbReference>
<dbReference type="Gene3D" id="3.40.50.720">
    <property type="entry name" value="NAD(P)-binding Rossmann-like Domain"/>
    <property type="match status" value="1"/>
</dbReference>
<dbReference type="Gene3D" id="3.10.129.110">
    <property type="entry name" value="Polyketide synthase dehydratase"/>
    <property type="match status" value="1"/>
</dbReference>
<dbReference type="Gene3D" id="3.40.50.150">
    <property type="entry name" value="Vaccinia Virus protein VP39"/>
    <property type="match status" value="1"/>
</dbReference>
<dbReference type="InterPro" id="IPR001227">
    <property type="entry name" value="Ac_transferase_dom_sf"/>
</dbReference>
<dbReference type="InterPro" id="IPR036736">
    <property type="entry name" value="ACP-like_sf"/>
</dbReference>
<dbReference type="InterPro" id="IPR014043">
    <property type="entry name" value="Acyl_transferase_dom"/>
</dbReference>
<dbReference type="InterPro" id="IPR016035">
    <property type="entry name" value="Acyl_Trfase/lysoPLipase"/>
</dbReference>
<dbReference type="InterPro" id="IPR011032">
    <property type="entry name" value="GroES-like_sf"/>
</dbReference>
<dbReference type="InterPro" id="IPR014031">
    <property type="entry name" value="Ketoacyl_synth_C"/>
</dbReference>
<dbReference type="InterPro" id="IPR014030">
    <property type="entry name" value="Ketoacyl_synth_N"/>
</dbReference>
<dbReference type="InterPro" id="IPR016036">
    <property type="entry name" value="Malonyl_transacylase_ACP-bd"/>
</dbReference>
<dbReference type="InterPro" id="IPR036291">
    <property type="entry name" value="NAD(P)-bd_dom_sf"/>
</dbReference>
<dbReference type="InterPro" id="IPR056501">
    <property type="entry name" value="NAD-bd_HRPKS_sdrA"/>
</dbReference>
<dbReference type="InterPro" id="IPR032821">
    <property type="entry name" value="PKS_assoc"/>
</dbReference>
<dbReference type="InterPro" id="IPR020841">
    <property type="entry name" value="PKS_Beta-ketoAc_synthase_dom"/>
</dbReference>
<dbReference type="InterPro" id="IPR042104">
    <property type="entry name" value="PKS_dehydratase_sf"/>
</dbReference>
<dbReference type="InterPro" id="IPR020807">
    <property type="entry name" value="PKS_DH"/>
</dbReference>
<dbReference type="InterPro" id="IPR049551">
    <property type="entry name" value="PKS_DH_C"/>
</dbReference>
<dbReference type="InterPro" id="IPR049552">
    <property type="entry name" value="PKS_DH_N"/>
</dbReference>
<dbReference type="InterPro" id="IPR020843">
    <property type="entry name" value="PKS_ER"/>
</dbReference>
<dbReference type="InterPro" id="IPR013968">
    <property type="entry name" value="PKS_KR"/>
</dbReference>
<dbReference type="InterPro" id="IPR049900">
    <property type="entry name" value="PKS_mFAS_DH"/>
</dbReference>
<dbReference type="InterPro" id="IPR050091">
    <property type="entry name" value="PKS_NRPS_Biosynth_Enz"/>
</dbReference>
<dbReference type="InterPro" id="IPR020806">
    <property type="entry name" value="PKS_PP-bd"/>
</dbReference>
<dbReference type="InterPro" id="IPR009081">
    <property type="entry name" value="PP-bd_ACP"/>
</dbReference>
<dbReference type="InterPro" id="IPR006162">
    <property type="entry name" value="Ppantetheine_attach_site"/>
</dbReference>
<dbReference type="InterPro" id="IPR029063">
    <property type="entry name" value="SAM-dependent_MTases_sf"/>
</dbReference>
<dbReference type="InterPro" id="IPR016039">
    <property type="entry name" value="Thiolase-like"/>
</dbReference>
<dbReference type="PANTHER" id="PTHR43775">
    <property type="entry name" value="FATTY ACID SYNTHASE"/>
    <property type="match status" value="1"/>
</dbReference>
<dbReference type="PANTHER" id="PTHR43775:SF22">
    <property type="entry name" value="SYNTHASE, PUTATIVE (JCVI)-RELATED"/>
    <property type="match status" value="1"/>
</dbReference>
<dbReference type="Pfam" id="PF23297">
    <property type="entry name" value="ACP_SdgA_C"/>
    <property type="match status" value="1"/>
</dbReference>
<dbReference type="Pfam" id="PF00698">
    <property type="entry name" value="Acyl_transf_1"/>
    <property type="match status" value="1"/>
</dbReference>
<dbReference type="Pfam" id="PF16197">
    <property type="entry name" value="KAsynt_C_assoc"/>
    <property type="match status" value="1"/>
</dbReference>
<dbReference type="Pfam" id="PF00109">
    <property type="entry name" value="ketoacyl-synt"/>
    <property type="match status" value="1"/>
</dbReference>
<dbReference type="Pfam" id="PF02801">
    <property type="entry name" value="Ketoacyl-synt_C"/>
    <property type="match status" value="1"/>
</dbReference>
<dbReference type="Pfam" id="PF08659">
    <property type="entry name" value="KR"/>
    <property type="match status" value="1"/>
</dbReference>
<dbReference type="Pfam" id="PF23114">
    <property type="entry name" value="NAD-bd_HRPKS_sdrA"/>
    <property type="match status" value="1"/>
</dbReference>
<dbReference type="Pfam" id="PF21089">
    <property type="entry name" value="PKS_DH_N"/>
    <property type="match status" value="1"/>
</dbReference>
<dbReference type="Pfam" id="PF14765">
    <property type="entry name" value="PS-DH"/>
    <property type="match status" value="1"/>
</dbReference>
<dbReference type="SMART" id="SM00827">
    <property type="entry name" value="PKS_AT"/>
    <property type="match status" value="1"/>
</dbReference>
<dbReference type="SMART" id="SM00826">
    <property type="entry name" value="PKS_DH"/>
    <property type="match status" value="1"/>
</dbReference>
<dbReference type="SMART" id="SM00829">
    <property type="entry name" value="PKS_ER"/>
    <property type="match status" value="1"/>
</dbReference>
<dbReference type="SMART" id="SM00822">
    <property type="entry name" value="PKS_KR"/>
    <property type="match status" value="1"/>
</dbReference>
<dbReference type="SMART" id="SM00825">
    <property type="entry name" value="PKS_KS"/>
    <property type="match status" value="1"/>
</dbReference>
<dbReference type="SMART" id="SM00823">
    <property type="entry name" value="PKS_PP"/>
    <property type="match status" value="1"/>
</dbReference>
<dbReference type="SUPFAM" id="SSF47336">
    <property type="entry name" value="ACP-like"/>
    <property type="match status" value="1"/>
</dbReference>
<dbReference type="SUPFAM" id="SSF52151">
    <property type="entry name" value="FabD/lysophospholipase-like"/>
    <property type="match status" value="1"/>
</dbReference>
<dbReference type="SUPFAM" id="SSF50129">
    <property type="entry name" value="GroES-like"/>
    <property type="match status" value="1"/>
</dbReference>
<dbReference type="SUPFAM" id="SSF51735">
    <property type="entry name" value="NAD(P)-binding Rossmann-fold domains"/>
    <property type="match status" value="2"/>
</dbReference>
<dbReference type="SUPFAM" id="SSF55048">
    <property type="entry name" value="Probable ACP-binding domain of malonyl-CoA ACP transacylase"/>
    <property type="match status" value="1"/>
</dbReference>
<dbReference type="SUPFAM" id="SSF53335">
    <property type="entry name" value="S-adenosyl-L-methionine-dependent methyltransferases"/>
    <property type="match status" value="1"/>
</dbReference>
<dbReference type="SUPFAM" id="SSF53901">
    <property type="entry name" value="Thiolase-like"/>
    <property type="match status" value="1"/>
</dbReference>
<dbReference type="PROSITE" id="PS50075">
    <property type="entry name" value="CARRIER"/>
    <property type="match status" value="1"/>
</dbReference>
<dbReference type="PROSITE" id="PS52004">
    <property type="entry name" value="KS3_2"/>
    <property type="match status" value="1"/>
</dbReference>
<dbReference type="PROSITE" id="PS00012">
    <property type="entry name" value="PHOSPHOPANTETHEINE"/>
    <property type="match status" value="1"/>
</dbReference>
<dbReference type="PROSITE" id="PS52019">
    <property type="entry name" value="PKS_MFAS_DH"/>
    <property type="match status" value="1"/>
</dbReference>
<accession>A0A084API3</accession>
<feature type="chain" id="PRO_0000442402" description="Highly reducing polyketide synthase SAT13">
    <location>
        <begin position="1"/>
        <end position="2383"/>
    </location>
</feature>
<feature type="domain" description="Ketosynthase family 3 (KS3)" evidence="4">
    <location>
        <begin position="6"/>
        <end position="433"/>
    </location>
</feature>
<feature type="domain" description="PKS/mFAS DH" evidence="5">
    <location>
        <begin position="922"/>
        <end position="1242"/>
    </location>
</feature>
<feature type="domain" description="Carrier" evidence="3">
    <location>
        <begin position="2287"/>
        <end position="2364"/>
    </location>
</feature>
<feature type="region of interest" description="Malonyl-CoA:ACP transacylase (MAT) domain" evidence="2">
    <location>
        <begin position="536"/>
        <end position="828"/>
    </location>
</feature>
<feature type="region of interest" description="Dehydratase (DH) domain" evidence="2">
    <location>
        <begin position="922"/>
        <end position="1239"/>
    </location>
</feature>
<feature type="region of interest" description="N-terminal hotdog fold" evidence="5">
    <location>
        <begin position="922"/>
        <end position="1062"/>
    </location>
</feature>
<feature type="region of interest" description="C-terminal hotdog fold" evidence="5">
    <location>
        <begin position="1087"/>
        <end position="1242"/>
    </location>
</feature>
<feature type="region of interest" description="Enoylreductase (ER) domain">
    <location>
        <begin position="1669"/>
        <end position="1977"/>
    </location>
</feature>
<feature type="region of interest" description="Catalytic ketoreductase (KRc) domain" evidence="2">
    <location>
        <begin position="2001"/>
        <end position="2184"/>
    </location>
</feature>
<feature type="active site" description="For beta-ketoacyl synthase activity" evidence="4">
    <location>
        <position position="180"/>
    </location>
</feature>
<feature type="active site" description="For beta-ketoacyl synthase activity" evidence="4">
    <location>
        <position position="315"/>
    </location>
</feature>
<feature type="active site" description="For beta-ketoacyl synthase activity" evidence="4">
    <location>
        <position position="355"/>
    </location>
</feature>
<feature type="active site" description="For malonyltransferase activity" evidence="1">
    <location>
        <position position="626"/>
    </location>
</feature>
<feature type="active site" description="Proton acceptor; for dehydratase activity" evidence="5">
    <location>
        <position position="954"/>
    </location>
</feature>
<feature type="active site" description="Proton donor; for dehydratase activity" evidence="5">
    <location>
        <position position="1152"/>
    </location>
</feature>
<feature type="modified residue" description="O-(pantetheine 4'-phosphoryl)serine" evidence="3">
    <location>
        <position position="2324"/>
    </location>
</feature>
<keyword id="KW-0511">Multifunctional enzyme</keyword>
<keyword id="KW-0560">Oxidoreductase</keyword>
<keyword id="KW-0596">Phosphopantetheine</keyword>
<keyword id="KW-0597">Phosphoprotein</keyword>
<keyword id="KW-0808">Transferase</keyword>
<comment type="function">
    <text evidence="9">Highly reducing polyketide synthase; part of the satratoxin SC2 cluster involved in the biosynthesis of satratoxins, trichothecene mycotoxins that are associated with human food poisonings (PubMed:25015739). Satratoxins are suggested to be made by products of multiple gene clusters (SC1, SC2 and SC3) that encode 21 proteins in all, including polyketide synthases, acetyltransferases, and other enzymes expected to modify the trichothecene skeleton (PubMed:25015739). SC1 encodes 10 proteins, SAT1 to SAT10 (PubMed:25015739). The largest are SAT8, which encodes a putative polyketide synthase (PKS) with a conventional non-reducing architecture, and SAT10, a putative protein containing four ankyrin repeats and thus may be involved in protein scaffolding (PubMed:25015739). The putative short-chain reductase SAT3 may assist the PKS in some capacity (PubMed:25015739). SAT6 contains a secretory lipase domain and acts probably as a trichothecene esterase (PubMed:25015739). SAT5 encodes a putative acetyltransferase, and so, with SAT6, may affect endogenous protection from toxicity (PubMed:25015739). The probable transcription factor SAT9 may regulate the expression of the SC1 cluster (PubMed:25015739). SC2 encodes proteins SAT11 to SAT16, the largest of which encodes the putative reducing PKS SAT13 (PubMed:25015739). SAT11 is a cytochrome P450 monooxygenase, while SAT14 and SAT16 are probable acetyltransferases (PubMed:25015739). The SC2 cluster may be regulated by the transcription factor SAT15 (PubMed:25015739). SC3 is a small cluster that encodes 5 proteins, SAT17 to SAT21 (PubMed:25015739). SAT21 is a putative MFS-type transporter which may have a role in exporting secondary metabolites (PubMed:25015739). The four other proteins putatively encoded in SC3 include the taurine hydroxylase-like protein SAT17, the O-methyltransferase SAT18, the acetyltransferase SAT19, and the Cys6-type zinc finger SAT20, the latter being probably involved in regulation of SC3 expression (PubMed:25015739).</text>
</comment>
<comment type="pathway">
    <text evidence="6">Mycotoxin biosynthesis.</text>
</comment>
<comment type="miscellaneous">
    <text evidence="8">Trichothecenes are sesquiterpenoid toxins that act by inhibiting protein biosynthesis.</text>
</comment>
<reference key="1">
    <citation type="journal article" date="2014" name="BMC Genomics">
        <title>Comparative genome sequencing reveals chemotype-specific gene clusters in the toxigenic black mold Stachybotrys.</title>
        <authorList>
            <person name="Semeiks J."/>
            <person name="Borek D."/>
            <person name="Otwinowski Z."/>
            <person name="Grishin N.V."/>
        </authorList>
    </citation>
    <scope>NUCLEOTIDE SEQUENCE [LARGE SCALE GENOMIC DNA]</scope>
    <scope>IDENTIFICATION</scope>
    <scope>FUNCTION</scope>
    <source>
        <strain>CBS 109288 / IBT 7711</strain>
    </source>
</reference>
<organism>
    <name type="scientific">Stachybotrys chartarum (strain CBS 109288 / IBT 7711)</name>
    <name type="common">Toxic black mold</name>
    <name type="synonym">Stilbospora chartarum</name>
    <dbReference type="NCBI Taxonomy" id="1280523"/>
    <lineage>
        <taxon>Eukaryota</taxon>
        <taxon>Fungi</taxon>
        <taxon>Dikarya</taxon>
        <taxon>Ascomycota</taxon>
        <taxon>Pezizomycotina</taxon>
        <taxon>Sordariomycetes</taxon>
        <taxon>Hypocreomycetidae</taxon>
        <taxon>Hypocreales</taxon>
        <taxon>Stachybotryaceae</taxon>
        <taxon>Stachybotrys</taxon>
    </lineage>
</organism>
<sequence>MSGPNPVPLAIVGIACRFPGDATNPERFWDLLANARSGWSRVPNDRWNEEAFWHPDPDDTNGTNNHMGGHFLNQDLARFDAGFFNVTPQEAASMDPQQRLLLETTYEALESAGIPQEHIRGSNTAAYMAMFTRDYDRNVYKDMMSIPKYHVTGTGDAILANRISHLFDLRGPSVTMDTGCSGGLTAISHACQALRSGLSDIGLAGAVNLILTPDHMVGMSNLHMLNVNGRSFSFDSRGAGYGRGEGVATLVIKRLDDAIRDKDPVRAILRDAAINQDGYTAGITLPSGRAQQALERRVWDVLNLDPATVGYVEAHGTGTLAGDSAELEGISKIFCENRDHGSPLIVGSVKSNIGHTECVSGIAAVIKSTLILENGTIPPNINFEQPRESLDLRNKKIKVPNALMPWPQTTGTARISVNSFGYGGTNAHAVLERAERVIDTTCPQEDDAPQLFIFSAASQTSLLGMLAANRDWVSENRERAWVMRDLAYTLSQRRSLLPWRFSCVAANRSELLETLSSVPQNANSIARITPGSRISFIFTGQGAQWAGMGRELLSMPTFNSSLQRSNEILQDLGCSWDLIEEVSKQKPESRLHEPELSQPLTTAIQIALVDLFREWGIVPDSVIGHSSGEIGAAYTAGHIAHCQAIKVAYFRGFSSAWAAQAHKRGAMLAVGLGEYDVEPYLEQLGQGHASIACQNSPNSTTVSGDDAAISELSEILTKESIFNRKLNITVAYHSHHMQTAACQYKAALEPLLTNPSLDTGIEMFSTVTGSIKKDAFNSNYWVENLVSKVRFCDGLQALCESTQASPLGSSKAERIFIEIGPHSALAGPTRQCIADLITPLPYSYTSGLLRETGAVKSALAMVGHIFNRGYSLNLAAISASNKTSQYATVLSNLPSYHWDHTRRHWNESRISREYRFRKHPYHDLLGLRMTEVSPLRPSWRHMIGTKGLPWLADHVVDDLVIFPGSGYLAMAIEACSQLADDRYPGREIERFSLNDIFFLKGLIIPDDGARVEVQLSLNPIEPADKDTRMNVMQHEFSVTAFTDEARWNEHCRGNIVVVFKTSSATERLVANGFTRGDMAAQLDPVSGKLTHAGQLYPELRKAGNSYGLTFNGIQRMKIGADSASSDVIIPDVVSRMPACHMRPHIIHPTTLDILLHTTLPLVHQKLGVGSVMPVHIRNMDVSADIESTPRKMFRVVTTLTSSHARAADTELFVFSEEGHVDDTPVVSAAGMELRSFVARDSNDAGSSDGHRDICSELKWIPDERFITAKHLQVLQPSILTKDALARCYALMAQYLKQMAIKHSDLSVLELGGDDTTSGATKTFLEVFHAGGTAPAMYDFCTSLKDFDVIQRKLEAFDCEKVHKMEMKRIELDAVSENRYDVVLSCNTIYNAADVKSVLSHARKLLKLDGVLLFVEDMSSRESRSSSEWSKLMSEASFKMQLAVTDNDATRQLTFFATRAVEDAIASVHNVSIVSGCNLPLHIQNFLPQIESELGSKGMQVTRSRWDKLPPNGTDIYIIVDDGSRPILSGINQDRFRIVTGLLQKTARIIWLSVQDDETFRFNPRKHLITGLSRTAHAENEGLDMVTIDVQETLNQKTQPEVIGFLSQVVGLFDCKHITREREYVYNGTDILIPRLIPHQRLNLQVSGKIGTSIEAMAFTNSSVPLKLSDGQNRLVFVENMDHKQALCHDYVEIETKAVGLPPGFNGVQSGNTVYEYAGIIIAVGSEVSTLKAGDRAVAYSSTPCANVLRVPAIQAQLIPSNLSFKDAAAMPRALMAVSHALVHIANVQPGQVVFVDDAATEIGLAAICVAQNLGSTLIAAVSTKEEAAFIKNTFKVPSRHIVPRDSYFGQRQVRTLVRPNGGLDVILGCGKSPVTAVTSELLKPFGLLVHVRNRASDPKRYDGTGYPPNLTVASFDIDSLLQASTKNSAELFQKVMEMVNRGMIPPSQSIVAIEAGIKIEEAISLAQKQGSMKKCVLEFNENSIVNVETSFHHIPSLKPHATYVVAGGLGDLGQRLLRLMAQAGARHLVSLSRKGAGSKEFRGLEKELKGVHPGCSLLAIDCDILREESVSAALAEIKQQGFPTVKGVVQSAVILKDATLDSMTAELFNSVVSVKAEGTLNLHRVFIQEELAFFISFSSVMSIIGGKAQANYNAGNAVQDAFAQFERRNPHCFYMSLNIGGIKDAAVNNDAIVQSIRRQGLTQISHEELSSYLKYAFSDDARKTGCKQPVIGFTAETIVSTTAVNGTAHTPMFTHVRQKPTAKTTVGNVNEKRSFKDIVNSGTNKGEISEFVARSICDKIADLTGIDLAEVNLDSGISDYGLDSLVSIELRNWLMREFDSPIQSSEVLDSHGIRDLAQKVVSRSRLVTTETDVVHTVNGEAPT</sequence>
<name>SAT13_STACB</name>
<evidence type="ECO:0000250" key="1">
    <source>
        <dbReference type="UniProtKB" id="L7X8J4"/>
    </source>
</evidence>
<evidence type="ECO:0000255" key="2"/>
<evidence type="ECO:0000255" key="3">
    <source>
        <dbReference type="PROSITE-ProRule" id="PRU00258"/>
    </source>
</evidence>
<evidence type="ECO:0000255" key="4">
    <source>
        <dbReference type="PROSITE-ProRule" id="PRU01348"/>
    </source>
</evidence>
<evidence type="ECO:0000255" key="5">
    <source>
        <dbReference type="PROSITE-ProRule" id="PRU01363"/>
    </source>
</evidence>
<evidence type="ECO:0000269" key="6">
    <source>
    </source>
</evidence>
<evidence type="ECO:0000303" key="7">
    <source>
    </source>
</evidence>
<evidence type="ECO:0000305" key="8"/>
<evidence type="ECO:0000305" key="9">
    <source>
    </source>
</evidence>
<gene>
    <name evidence="7" type="primary">SAT13</name>
    <name type="ORF">S7711_09751</name>
</gene>